<feature type="chain" id="PRO_0000380113" description="Probable oxidoreductase YoaE">
    <location>
        <begin position="1"/>
        <end position="680"/>
    </location>
</feature>
<feature type="domain" description="4Fe-4S Mo/W bis-MGD-type" evidence="2">
    <location>
        <begin position="9"/>
        <end position="66"/>
    </location>
</feature>
<feature type="binding site" evidence="2">
    <location>
        <position position="16"/>
    </location>
    <ligand>
        <name>[4Fe-4S] cluster</name>
        <dbReference type="ChEBI" id="CHEBI:49883"/>
    </ligand>
</feature>
<feature type="binding site" evidence="2">
    <location>
        <position position="20"/>
    </location>
    <ligand>
        <name>[4Fe-4S] cluster</name>
        <dbReference type="ChEBI" id="CHEBI:49883"/>
    </ligand>
</feature>
<feature type="binding site" evidence="2">
    <location>
        <position position="24"/>
    </location>
    <ligand>
        <name>[4Fe-4S] cluster</name>
        <dbReference type="ChEBI" id="CHEBI:49883"/>
    </ligand>
</feature>
<feature type="binding site" evidence="2">
    <location>
        <position position="52"/>
    </location>
    <ligand>
        <name>[4Fe-4S] cluster</name>
        <dbReference type="ChEBI" id="CHEBI:49883"/>
    </ligand>
</feature>
<gene>
    <name type="primary">yoaE</name>
    <name type="ordered locus">BSU18570</name>
</gene>
<dbReference type="EC" id="1.-.-.-"/>
<dbReference type="EMBL" id="AL009126">
    <property type="protein sequence ID" value="CAB13750.2"/>
    <property type="molecule type" value="Genomic_DNA"/>
</dbReference>
<dbReference type="RefSeq" id="NP_389739.2">
    <property type="nucleotide sequence ID" value="NC_000964.3"/>
</dbReference>
<dbReference type="RefSeq" id="WP_004399552.1">
    <property type="nucleotide sequence ID" value="NZ_OZ025638.1"/>
</dbReference>
<dbReference type="SMR" id="C0SP82"/>
<dbReference type="FunCoup" id="C0SP82">
    <property type="interactions" value="58"/>
</dbReference>
<dbReference type="STRING" id="224308.BSU18570"/>
<dbReference type="PaxDb" id="224308-BSU18570"/>
<dbReference type="EnsemblBacteria" id="CAB13750">
    <property type="protein sequence ID" value="CAB13750"/>
    <property type="gene ID" value="BSU_18570"/>
</dbReference>
<dbReference type="GeneID" id="940113"/>
<dbReference type="KEGG" id="bsu:BSU18570"/>
<dbReference type="PATRIC" id="fig|224308.179.peg.2024"/>
<dbReference type="eggNOG" id="COG0243">
    <property type="taxonomic scope" value="Bacteria"/>
</dbReference>
<dbReference type="InParanoid" id="C0SP82"/>
<dbReference type="OrthoDB" id="9803192at2"/>
<dbReference type="PhylomeDB" id="C0SP82"/>
<dbReference type="BioCyc" id="BSUB:BSU18570-MONOMER"/>
<dbReference type="Proteomes" id="UP000001570">
    <property type="component" value="Chromosome"/>
</dbReference>
<dbReference type="GO" id="GO:0051536">
    <property type="term" value="F:iron-sulfur cluster binding"/>
    <property type="evidence" value="ECO:0007669"/>
    <property type="project" value="UniProtKB-KW"/>
</dbReference>
<dbReference type="GO" id="GO:0046872">
    <property type="term" value="F:metal ion binding"/>
    <property type="evidence" value="ECO:0007669"/>
    <property type="project" value="UniProtKB-KW"/>
</dbReference>
<dbReference type="GO" id="GO:0043546">
    <property type="term" value="F:molybdopterin cofactor binding"/>
    <property type="evidence" value="ECO:0007669"/>
    <property type="project" value="InterPro"/>
</dbReference>
<dbReference type="GO" id="GO:0016491">
    <property type="term" value="F:oxidoreductase activity"/>
    <property type="evidence" value="ECO:0007669"/>
    <property type="project" value="UniProtKB-KW"/>
</dbReference>
<dbReference type="CDD" id="cd02766">
    <property type="entry name" value="MopB_3"/>
    <property type="match status" value="1"/>
</dbReference>
<dbReference type="CDD" id="cd02786">
    <property type="entry name" value="MopB_CT_3"/>
    <property type="match status" value="1"/>
</dbReference>
<dbReference type="FunFam" id="2.40.40.20:FF:000034">
    <property type="entry name" value="Probable oxidoreductase YoaE"/>
    <property type="match status" value="1"/>
</dbReference>
<dbReference type="Gene3D" id="2.40.40.20">
    <property type="match status" value="1"/>
</dbReference>
<dbReference type="Gene3D" id="3.40.50.740">
    <property type="match status" value="1"/>
</dbReference>
<dbReference type="Gene3D" id="2.20.25.90">
    <property type="entry name" value="ADC-like domains"/>
    <property type="match status" value="1"/>
</dbReference>
<dbReference type="Gene3D" id="3.40.228.10">
    <property type="entry name" value="Dimethylsulfoxide Reductase, domain 2"/>
    <property type="match status" value="1"/>
</dbReference>
<dbReference type="Gene3D" id="3.30.2070.10">
    <property type="entry name" value="Formate dehydrogenase/DMSO reductase"/>
    <property type="match status" value="1"/>
</dbReference>
<dbReference type="InterPro" id="IPR009010">
    <property type="entry name" value="Asp_de-COase-like_dom_sf"/>
</dbReference>
<dbReference type="InterPro" id="IPR006657">
    <property type="entry name" value="MoPterin_dinucl-bd_dom"/>
</dbReference>
<dbReference type="InterPro" id="IPR006656">
    <property type="entry name" value="Mopterin_OxRdtase"/>
</dbReference>
<dbReference type="InterPro" id="IPR006963">
    <property type="entry name" value="Mopterin_OxRdtase_4Fe-4S_dom"/>
</dbReference>
<dbReference type="InterPro" id="IPR006655">
    <property type="entry name" value="Mopterin_OxRdtase_prok_CS"/>
</dbReference>
<dbReference type="InterPro" id="IPR050612">
    <property type="entry name" value="Prok_Mopterin_Oxidored"/>
</dbReference>
<dbReference type="InterPro" id="IPR037920">
    <property type="entry name" value="YoaE_C"/>
</dbReference>
<dbReference type="PANTHER" id="PTHR43742:SF6">
    <property type="entry name" value="OXIDOREDUCTASE YYAE-RELATED"/>
    <property type="match status" value="1"/>
</dbReference>
<dbReference type="PANTHER" id="PTHR43742">
    <property type="entry name" value="TRIMETHYLAMINE-N-OXIDE REDUCTASE"/>
    <property type="match status" value="1"/>
</dbReference>
<dbReference type="Pfam" id="PF04879">
    <property type="entry name" value="Molybdop_Fe4S4"/>
    <property type="match status" value="1"/>
</dbReference>
<dbReference type="Pfam" id="PF00384">
    <property type="entry name" value="Molybdopterin"/>
    <property type="match status" value="1"/>
</dbReference>
<dbReference type="Pfam" id="PF01568">
    <property type="entry name" value="Molydop_binding"/>
    <property type="match status" value="1"/>
</dbReference>
<dbReference type="SMART" id="SM00926">
    <property type="entry name" value="Molybdop_Fe4S4"/>
    <property type="match status" value="1"/>
</dbReference>
<dbReference type="SUPFAM" id="SSF50692">
    <property type="entry name" value="ADC-like"/>
    <property type="match status" value="1"/>
</dbReference>
<dbReference type="SUPFAM" id="SSF53706">
    <property type="entry name" value="Formate dehydrogenase/DMSO reductase, domains 1-3"/>
    <property type="match status" value="1"/>
</dbReference>
<dbReference type="PROSITE" id="PS51669">
    <property type="entry name" value="4FE4S_MOW_BIS_MGD"/>
    <property type="match status" value="1"/>
</dbReference>
<dbReference type="PROSITE" id="PS00490">
    <property type="entry name" value="MOLYBDOPTERIN_PROK_2"/>
    <property type="match status" value="1"/>
</dbReference>
<sequence length="680" mass="76167">MRSFATQQNGIFKSVCSLDCPDQCGLLIHKKDGKIVKVQGDPDHPVTAGNICNKVRNMTERIYDEKRLTTPLKRTGAKGQAIFEPISWKEAIDTITSRWKQLIDEEGAESILPYSFYGNMGKLTAEGMDRRFFYRMGSSQLERTICSKAGSEGYKYTMGISAGIDPEETVHTKLFIFWGINAVSTNMHQITIAQKARKKGAKIVVIDVHKNQTGRLADWFIPIKPGTDSALALGIMHILFKENLHDEAFLSEYTVGYEELREHVKQYDPEKVSTITGVSTEDIYRLAKMYGETSPSFIRIGNGPQHHDNGGMIVRTIACLPAITGQWLHTGGGAIKHNSGILEYNTNALQRPDLLKGRTPRSFNMNQLGRVLLETDPPIRSLFIYGTNPAVVAPEANKVRQGLLREDLFTVVHDLFLTETAAYADIVLPATSAFENTDFYTSYWHHYIQLQQPVIERYGESKSNTEVFRLLAEAMGFTDQELKDSDEVLIRQALDHPDNPHLAEIDYDSLTKHSFMKAKREKPLFPGELPTPSGKIELYSEKMKQDGFPALPTYTPLVTDNEHPFMYVPGPNHNFLNSTFSNNEKHIKLEKTPKLFINTKDAEKHGIVDGAPVRIWNSRGECELTAAVGEQVLPGVVVSQGLWADEQGKKQLVNALTPDRLSDMGGGATFFSGRVQIEKV</sequence>
<accession>C0SP82</accession>
<reference key="1">
    <citation type="journal article" date="1997" name="Nature">
        <title>The complete genome sequence of the Gram-positive bacterium Bacillus subtilis.</title>
        <authorList>
            <person name="Kunst F."/>
            <person name="Ogasawara N."/>
            <person name="Moszer I."/>
            <person name="Albertini A.M."/>
            <person name="Alloni G."/>
            <person name="Azevedo V."/>
            <person name="Bertero M.G."/>
            <person name="Bessieres P."/>
            <person name="Bolotin A."/>
            <person name="Borchert S."/>
            <person name="Borriss R."/>
            <person name="Boursier L."/>
            <person name="Brans A."/>
            <person name="Braun M."/>
            <person name="Brignell S.C."/>
            <person name="Bron S."/>
            <person name="Brouillet S."/>
            <person name="Bruschi C.V."/>
            <person name="Caldwell B."/>
            <person name="Capuano V."/>
            <person name="Carter N.M."/>
            <person name="Choi S.-K."/>
            <person name="Codani J.-J."/>
            <person name="Connerton I.F."/>
            <person name="Cummings N.J."/>
            <person name="Daniel R.A."/>
            <person name="Denizot F."/>
            <person name="Devine K.M."/>
            <person name="Duesterhoeft A."/>
            <person name="Ehrlich S.D."/>
            <person name="Emmerson P.T."/>
            <person name="Entian K.-D."/>
            <person name="Errington J."/>
            <person name="Fabret C."/>
            <person name="Ferrari E."/>
            <person name="Foulger D."/>
            <person name="Fritz C."/>
            <person name="Fujita M."/>
            <person name="Fujita Y."/>
            <person name="Fuma S."/>
            <person name="Galizzi A."/>
            <person name="Galleron N."/>
            <person name="Ghim S.-Y."/>
            <person name="Glaser P."/>
            <person name="Goffeau A."/>
            <person name="Golightly E.J."/>
            <person name="Grandi G."/>
            <person name="Guiseppi G."/>
            <person name="Guy B.J."/>
            <person name="Haga K."/>
            <person name="Haiech J."/>
            <person name="Harwood C.R."/>
            <person name="Henaut A."/>
            <person name="Hilbert H."/>
            <person name="Holsappel S."/>
            <person name="Hosono S."/>
            <person name="Hullo M.-F."/>
            <person name="Itaya M."/>
            <person name="Jones L.-M."/>
            <person name="Joris B."/>
            <person name="Karamata D."/>
            <person name="Kasahara Y."/>
            <person name="Klaerr-Blanchard M."/>
            <person name="Klein C."/>
            <person name="Kobayashi Y."/>
            <person name="Koetter P."/>
            <person name="Koningstein G."/>
            <person name="Krogh S."/>
            <person name="Kumano M."/>
            <person name="Kurita K."/>
            <person name="Lapidus A."/>
            <person name="Lardinois S."/>
            <person name="Lauber J."/>
            <person name="Lazarevic V."/>
            <person name="Lee S.-M."/>
            <person name="Levine A."/>
            <person name="Liu H."/>
            <person name="Masuda S."/>
            <person name="Mauel C."/>
            <person name="Medigue C."/>
            <person name="Medina N."/>
            <person name="Mellado R.P."/>
            <person name="Mizuno M."/>
            <person name="Moestl D."/>
            <person name="Nakai S."/>
            <person name="Noback M."/>
            <person name="Noone D."/>
            <person name="O'Reilly M."/>
            <person name="Ogawa K."/>
            <person name="Ogiwara A."/>
            <person name="Oudega B."/>
            <person name="Park S.-H."/>
            <person name="Parro V."/>
            <person name="Pohl T.M."/>
            <person name="Portetelle D."/>
            <person name="Porwollik S."/>
            <person name="Prescott A.M."/>
            <person name="Presecan E."/>
            <person name="Pujic P."/>
            <person name="Purnelle B."/>
            <person name="Rapoport G."/>
            <person name="Rey M."/>
            <person name="Reynolds S."/>
            <person name="Rieger M."/>
            <person name="Rivolta C."/>
            <person name="Rocha E."/>
            <person name="Roche B."/>
            <person name="Rose M."/>
            <person name="Sadaie Y."/>
            <person name="Sato T."/>
            <person name="Scanlan E."/>
            <person name="Schleich S."/>
            <person name="Schroeter R."/>
            <person name="Scoffone F."/>
            <person name="Sekiguchi J."/>
            <person name="Sekowska A."/>
            <person name="Seror S.J."/>
            <person name="Serror P."/>
            <person name="Shin B.-S."/>
            <person name="Soldo B."/>
            <person name="Sorokin A."/>
            <person name="Tacconi E."/>
            <person name="Takagi T."/>
            <person name="Takahashi H."/>
            <person name="Takemaru K."/>
            <person name="Takeuchi M."/>
            <person name="Tamakoshi A."/>
            <person name="Tanaka T."/>
            <person name="Terpstra P."/>
            <person name="Tognoni A."/>
            <person name="Tosato V."/>
            <person name="Uchiyama S."/>
            <person name="Vandenbol M."/>
            <person name="Vannier F."/>
            <person name="Vassarotti A."/>
            <person name="Viari A."/>
            <person name="Wambutt R."/>
            <person name="Wedler E."/>
            <person name="Wedler H."/>
            <person name="Weitzenegger T."/>
            <person name="Winters P."/>
            <person name="Wipat A."/>
            <person name="Yamamoto H."/>
            <person name="Yamane K."/>
            <person name="Yasumoto K."/>
            <person name="Yata K."/>
            <person name="Yoshida K."/>
            <person name="Yoshikawa H.-F."/>
            <person name="Zumstein E."/>
            <person name="Yoshikawa H."/>
            <person name="Danchin A."/>
        </authorList>
    </citation>
    <scope>NUCLEOTIDE SEQUENCE [LARGE SCALE GENOMIC DNA]</scope>
    <source>
        <strain>168</strain>
    </source>
</reference>
<reference key="2">
    <citation type="journal article" date="2009" name="Microbiology">
        <title>From a consortium sequence to a unified sequence: the Bacillus subtilis 168 reference genome a decade later.</title>
        <authorList>
            <person name="Barbe V."/>
            <person name="Cruveiller S."/>
            <person name="Kunst F."/>
            <person name="Lenoble P."/>
            <person name="Meurice G."/>
            <person name="Sekowska A."/>
            <person name="Vallenet D."/>
            <person name="Wang T."/>
            <person name="Moszer I."/>
            <person name="Medigue C."/>
            <person name="Danchin A."/>
        </authorList>
    </citation>
    <scope>SEQUENCE REVISION TO 651-680</scope>
</reference>
<organism>
    <name type="scientific">Bacillus subtilis (strain 168)</name>
    <dbReference type="NCBI Taxonomy" id="224308"/>
    <lineage>
        <taxon>Bacteria</taxon>
        <taxon>Bacillati</taxon>
        <taxon>Bacillota</taxon>
        <taxon>Bacilli</taxon>
        <taxon>Bacillales</taxon>
        <taxon>Bacillaceae</taxon>
        <taxon>Bacillus</taxon>
    </lineage>
</organism>
<protein>
    <recommendedName>
        <fullName>Probable oxidoreductase YoaE</fullName>
        <ecNumber>1.-.-.-</ecNumber>
    </recommendedName>
</protein>
<comment type="cofactor">
    <cofactor evidence="1">
        <name>Mo-bis(molybdopterin guanine dinucleotide)</name>
        <dbReference type="ChEBI" id="CHEBI:60539"/>
    </cofactor>
    <text evidence="1">Binds 1 molybdenum-bis(molybdopterin guanine dinucleotide) (Mo-bis-MGD) cofactor per subunit.</text>
</comment>
<comment type="similarity">
    <text evidence="3">Belongs to the prokaryotic molybdopterin-containing oxidoreductase family.</text>
</comment>
<keyword id="KW-0408">Iron</keyword>
<keyword id="KW-0411">Iron-sulfur</keyword>
<keyword id="KW-0479">Metal-binding</keyword>
<keyword id="KW-0500">Molybdenum</keyword>
<keyword id="KW-0560">Oxidoreductase</keyword>
<keyword id="KW-1185">Reference proteome</keyword>
<proteinExistence type="inferred from homology"/>
<name>YOAE_BACSU</name>
<evidence type="ECO:0000250" key="1"/>
<evidence type="ECO:0000255" key="2">
    <source>
        <dbReference type="PROSITE-ProRule" id="PRU01004"/>
    </source>
</evidence>
<evidence type="ECO:0000305" key="3"/>